<name>TBL38_ARATH</name>
<gene>
    <name type="primary">TBL38</name>
    <name type="ordered locus">At1g29050</name>
    <name type="ORF">F28N24.24</name>
</gene>
<accession>Q8VY22</accession>
<accession>Q9LP35</accession>
<protein>
    <recommendedName>
        <fullName>Protein trichome birefringence-like 38</fullName>
    </recommendedName>
</protein>
<evidence type="ECO:0000250" key="1">
    <source>
        <dbReference type="UniProtKB" id="Q9FG35"/>
    </source>
</evidence>
<evidence type="ECO:0000250" key="2">
    <source>
        <dbReference type="UniProtKB" id="Q9LY46"/>
    </source>
</evidence>
<evidence type="ECO:0000255" key="3"/>
<evidence type="ECO:0000305" key="4"/>
<evidence type="ECO:0000305" key="5">
    <source>
    </source>
</evidence>
<keyword id="KW-0472">Membrane</keyword>
<keyword id="KW-1185">Reference proteome</keyword>
<keyword id="KW-0735">Signal-anchor</keyword>
<keyword id="KW-0812">Transmembrane</keyword>
<keyword id="KW-1133">Transmembrane helix</keyword>
<organism>
    <name type="scientific">Arabidopsis thaliana</name>
    <name type="common">Mouse-ear cress</name>
    <dbReference type="NCBI Taxonomy" id="3702"/>
    <lineage>
        <taxon>Eukaryota</taxon>
        <taxon>Viridiplantae</taxon>
        <taxon>Streptophyta</taxon>
        <taxon>Embryophyta</taxon>
        <taxon>Tracheophyta</taxon>
        <taxon>Spermatophyta</taxon>
        <taxon>Magnoliopsida</taxon>
        <taxon>eudicotyledons</taxon>
        <taxon>Gunneridae</taxon>
        <taxon>Pentapetalae</taxon>
        <taxon>rosids</taxon>
        <taxon>malvids</taxon>
        <taxon>Brassicales</taxon>
        <taxon>Brassicaceae</taxon>
        <taxon>Camelineae</taxon>
        <taxon>Arabidopsis</taxon>
    </lineage>
</organism>
<comment type="function">
    <text evidence="1 2">May act as a bridging protein that binds pectin and other cell wall polysaccharides. Probably involved in maintaining esterification of pectins (By similarity). May be involved in the specific O-acetylation of cell wall polymers (By similarity).</text>
</comment>
<comment type="subcellular location">
    <subcellularLocation>
        <location evidence="4">Membrane</location>
        <topology evidence="4">Single-pass type II membrane protein</topology>
    </subcellularLocation>
</comment>
<comment type="miscellaneous">
    <text evidence="5">Contains 2 motifs that are conserved in esterases, but it is unlikely that this protein belongs to the catalytically active pectin esterases.</text>
</comment>
<comment type="similarity">
    <text evidence="4">Belongs to the PC-esterase family. TBL subfamily.</text>
</comment>
<comment type="sequence caution" evidence="4">
    <conflict type="erroneous gene model prediction">
        <sequence resource="EMBL-CDS" id="AAF88130"/>
    </conflict>
</comment>
<dbReference type="EMBL" id="AC021043">
    <property type="protein sequence ID" value="AAF88130.1"/>
    <property type="status" value="ALT_SEQ"/>
    <property type="molecule type" value="Genomic_DNA"/>
</dbReference>
<dbReference type="EMBL" id="CP002684">
    <property type="protein sequence ID" value="AEE31037.1"/>
    <property type="molecule type" value="Genomic_DNA"/>
</dbReference>
<dbReference type="EMBL" id="AY074272">
    <property type="protein sequence ID" value="AAL66969.1"/>
    <property type="molecule type" value="mRNA"/>
</dbReference>
<dbReference type="EMBL" id="AY096662">
    <property type="protein sequence ID" value="AAM20296.1"/>
    <property type="molecule type" value="mRNA"/>
</dbReference>
<dbReference type="EMBL" id="AK227259">
    <property type="protein sequence ID" value="BAE99289.1"/>
    <property type="molecule type" value="mRNA"/>
</dbReference>
<dbReference type="PIR" id="G86412">
    <property type="entry name" value="G86412"/>
</dbReference>
<dbReference type="RefSeq" id="NP_564318.1">
    <property type="nucleotide sequence ID" value="NM_102646.5"/>
</dbReference>
<dbReference type="SMR" id="Q8VY22"/>
<dbReference type="FunCoup" id="Q8VY22">
    <property type="interactions" value="68"/>
</dbReference>
<dbReference type="STRING" id="3702.Q8VY22"/>
<dbReference type="PaxDb" id="3702-AT1G29050.1"/>
<dbReference type="ProteomicsDB" id="234162"/>
<dbReference type="EnsemblPlants" id="AT1G29050.1">
    <property type="protein sequence ID" value="AT1G29050.1"/>
    <property type="gene ID" value="AT1G29050"/>
</dbReference>
<dbReference type="GeneID" id="839779"/>
<dbReference type="Gramene" id="AT1G29050.1">
    <property type="protein sequence ID" value="AT1G29050.1"/>
    <property type="gene ID" value="AT1G29050"/>
</dbReference>
<dbReference type="KEGG" id="ath:AT1G29050"/>
<dbReference type="Araport" id="AT1G29050"/>
<dbReference type="TAIR" id="AT1G29050">
    <property type="gene designation" value="TBL38"/>
</dbReference>
<dbReference type="eggNOG" id="ENOG502QQWH">
    <property type="taxonomic scope" value="Eukaryota"/>
</dbReference>
<dbReference type="HOGENOM" id="CLU_020953_3_0_1"/>
<dbReference type="InParanoid" id="Q8VY22"/>
<dbReference type="OMA" id="RWRPTSC"/>
<dbReference type="PhylomeDB" id="Q8VY22"/>
<dbReference type="PRO" id="PR:Q8VY22"/>
<dbReference type="Proteomes" id="UP000006548">
    <property type="component" value="Chromosome 1"/>
</dbReference>
<dbReference type="ExpressionAtlas" id="Q8VY22">
    <property type="expression patterns" value="baseline and differential"/>
</dbReference>
<dbReference type="GO" id="GO:0016020">
    <property type="term" value="C:membrane"/>
    <property type="evidence" value="ECO:0007669"/>
    <property type="project" value="UniProtKB-SubCell"/>
</dbReference>
<dbReference type="GO" id="GO:0016413">
    <property type="term" value="F:O-acetyltransferase activity"/>
    <property type="evidence" value="ECO:0007669"/>
    <property type="project" value="InterPro"/>
</dbReference>
<dbReference type="InterPro" id="IPR029962">
    <property type="entry name" value="TBL"/>
</dbReference>
<dbReference type="InterPro" id="IPR026057">
    <property type="entry name" value="TBL_C"/>
</dbReference>
<dbReference type="InterPro" id="IPR025846">
    <property type="entry name" value="TBL_N"/>
</dbReference>
<dbReference type="PANTHER" id="PTHR32285:SF280">
    <property type="entry name" value="PROTEIN TRICHOME BIREFRINGENCE-LIKE 38"/>
    <property type="match status" value="1"/>
</dbReference>
<dbReference type="PANTHER" id="PTHR32285">
    <property type="entry name" value="PROTEIN TRICHOME BIREFRINGENCE-LIKE 9-RELATED"/>
    <property type="match status" value="1"/>
</dbReference>
<dbReference type="Pfam" id="PF13839">
    <property type="entry name" value="PC-Esterase"/>
    <property type="match status" value="1"/>
</dbReference>
<dbReference type="Pfam" id="PF14416">
    <property type="entry name" value="PMR5N"/>
    <property type="match status" value="1"/>
</dbReference>
<reference key="1">
    <citation type="journal article" date="2000" name="Nature">
        <title>Sequence and analysis of chromosome 1 of the plant Arabidopsis thaliana.</title>
        <authorList>
            <person name="Theologis A."/>
            <person name="Ecker J.R."/>
            <person name="Palm C.J."/>
            <person name="Federspiel N.A."/>
            <person name="Kaul S."/>
            <person name="White O."/>
            <person name="Alonso J."/>
            <person name="Altafi H."/>
            <person name="Araujo R."/>
            <person name="Bowman C.L."/>
            <person name="Brooks S.Y."/>
            <person name="Buehler E."/>
            <person name="Chan A."/>
            <person name="Chao Q."/>
            <person name="Chen H."/>
            <person name="Cheuk R.F."/>
            <person name="Chin C.W."/>
            <person name="Chung M.K."/>
            <person name="Conn L."/>
            <person name="Conway A.B."/>
            <person name="Conway A.R."/>
            <person name="Creasy T.H."/>
            <person name="Dewar K."/>
            <person name="Dunn P."/>
            <person name="Etgu P."/>
            <person name="Feldblyum T.V."/>
            <person name="Feng J.-D."/>
            <person name="Fong B."/>
            <person name="Fujii C.Y."/>
            <person name="Gill J.E."/>
            <person name="Goldsmith A.D."/>
            <person name="Haas B."/>
            <person name="Hansen N.F."/>
            <person name="Hughes B."/>
            <person name="Huizar L."/>
            <person name="Hunter J.L."/>
            <person name="Jenkins J."/>
            <person name="Johnson-Hopson C."/>
            <person name="Khan S."/>
            <person name="Khaykin E."/>
            <person name="Kim C.J."/>
            <person name="Koo H.L."/>
            <person name="Kremenetskaia I."/>
            <person name="Kurtz D.B."/>
            <person name="Kwan A."/>
            <person name="Lam B."/>
            <person name="Langin-Hooper S."/>
            <person name="Lee A."/>
            <person name="Lee J.M."/>
            <person name="Lenz C.A."/>
            <person name="Li J.H."/>
            <person name="Li Y.-P."/>
            <person name="Lin X."/>
            <person name="Liu S.X."/>
            <person name="Liu Z.A."/>
            <person name="Luros J.S."/>
            <person name="Maiti R."/>
            <person name="Marziali A."/>
            <person name="Militscher J."/>
            <person name="Miranda M."/>
            <person name="Nguyen M."/>
            <person name="Nierman W.C."/>
            <person name="Osborne B.I."/>
            <person name="Pai G."/>
            <person name="Peterson J."/>
            <person name="Pham P.K."/>
            <person name="Rizzo M."/>
            <person name="Rooney T."/>
            <person name="Rowley D."/>
            <person name="Sakano H."/>
            <person name="Salzberg S.L."/>
            <person name="Schwartz J.R."/>
            <person name="Shinn P."/>
            <person name="Southwick A.M."/>
            <person name="Sun H."/>
            <person name="Tallon L.J."/>
            <person name="Tambunga G."/>
            <person name="Toriumi M.J."/>
            <person name="Town C.D."/>
            <person name="Utterback T."/>
            <person name="Van Aken S."/>
            <person name="Vaysberg M."/>
            <person name="Vysotskaia V.S."/>
            <person name="Walker M."/>
            <person name="Wu D."/>
            <person name="Yu G."/>
            <person name="Fraser C.M."/>
            <person name="Venter J.C."/>
            <person name="Davis R.W."/>
        </authorList>
    </citation>
    <scope>NUCLEOTIDE SEQUENCE [LARGE SCALE GENOMIC DNA]</scope>
    <source>
        <strain>cv. Columbia</strain>
    </source>
</reference>
<reference key="2">
    <citation type="journal article" date="2017" name="Plant J.">
        <title>Araport11: a complete reannotation of the Arabidopsis thaliana reference genome.</title>
        <authorList>
            <person name="Cheng C.Y."/>
            <person name="Krishnakumar V."/>
            <person name="Chan A.P."/>
            <person name="Thibaud-Nissen F."/>
            <person name="Schobel S."/>
            <person name="Town C.D."/>
        </authorList>
    </citation>
    <scope>GENOME REANNOTATION</scope>
    <source>
        <strain>cv. Columbia</strain>
    </source>
</reference>
<reference key="3">
    <citation type="journal article" date="2003" name="Science">
        <title>Empirical analysis of transcriptional activity in the Arabidopsis genome.</title>
        <authorList>
            <person name="Yamada K."/>
            <person name="Lim J."/>
            <person name="Dale J.M."/>
            <person name="Chen H."/>
            <person name="Shinn P."/>
            <person name="Palm C.J."/>
            <person name="Southwick A.M."/>
            <person name="Wu H.C."/>
            <person name="Kim C.J."/>
            <person name="Nguyen M."/>
            <person name="Pham P.K."/>
            <person name="Cheuk R.F."/>
            <person name="Karlin-Newmann G."/>
            <person name="Liu S.X."/>
            <person name="Lam B."/>
            <person name="Sakano H."/>
            <person name="Wu T."/>
            <person name="Yu G."/>
            <person name="Miranda M."/>
            <person name="Quach H.L."/>
            <person name="Tripp M."/>
            <person name="Chang C.H."/>
            <person name="Lee J.M."/>
            <person name="Toriumi M.J."/>
            <person name="Chan M.M."/>
            <person name="Tang C.C."/>
            <person name="Onodera C.S."/>
            <person name="Deng J.M."/>
            <person name="Akiyama K."/>
            <person name="Ansari Y."/>
            <person name="Arakawa T."/>
            <person name="Banh J."/>
            <person name="Banno F."/>
            <person name="Bowser L."/>
            <person name="Brooks S.Y."/>
            <person name="Carninci P."/>
            <person name="Chao Q."/>
            <person name="Choy N."/>
            <person name="Enju A."/>
            <person name="Goldsmith A.D."/>
            <person name="Gurjal M."/>
            <person name="Hansen N.F."/>
            <person name="Hayashizaki Y."/>
            <person name="Johnson-Hopson C."/>
            <person name="Hsuan V.W."/>
            <person name="Iida K."/>
            <person name="Karnes M."/>
            <person name="Khan S."/>
            <person name="Koesema E."/>
            <person name="Ishida J."/>
            <person name="Jiang P.X."/>
            <person name="Jones T."/>
            <person name="Kawai J."/>
            <person name="Kamiya A."/>
            <person name="Meyers C."/>
            <person name="Nakajima M."/>
            <person name="Narusaka M."/>
            <person name="Seki M."/>
            <person name="Sakurai T."/>
            <person name="Satou M."/>
            <person name="Tamse R."/>
            <person name="Vaysberg M."/>
            <person name="Wallender E.K."/>
            <person name="Wong C."/>
            <person name="Yamamura Y."/>
            <person name="Yuan S."/>
            <person name="Shinozaki K."/>
            <person name="Davis R.W."/>
            <person name="Theologis A."/>
            <person name="Ecker J.R."/>
        </authorList>
    </citation>
    <scope>NUCLEOTIDE SEQUENCE [LARGE SCALE MRNA]</scope>
    <source>
        <strain>cv. Columbia</strain>
    </source>
</reference>
<reference key="4">
    <citation type="submission" date="2006-07" db="EMBL/GenBank/DDBJ databases">
        <title>Large-scale analysis of RIKEN Arabidopsis full-length (RAFL) cDNAs.</title>
        <authorList>
            <person name="Totoki Y."/>
            <person name="Seki M."/>
            <person name="Ishida J."/>
            <person name="Nakajima M."/>
            <person name="Enju A."/>
            <person name="Kamiya A."/>
            <person name="Narusaka M."/>
            <person name="Shin-i T."/>
            <person name="Nakagawa M."/>
            <person name="Sakamoto N."/>
            <person name="Oishi K."/>
            <person name="Kohara Y."/>
            <person name="Kobayashi M."/>
            <person name="Toyoda A."/>
            <person name="Sakaki Y."/>
            <person name="Sakurai T."/>
            <person name="Iida K."/>
            <person name="Akiyama K."/>
            <person name="Satou M."/>
            <person name="Toyoda T."/>
            <person name="Konagaya A."/>
            <person name="Carninci P."/>
            <person name="Kawai J."/>
            <person name="Hayashizaki Y."/>
            <person name="Shinozaki K."/>
        </authorList>
    </citation>
    <scope>NUCLEOTIDE SEQUENCE [LARGE SCALE MRNA]</scope>
    <source>
        <strain>cv. Columbia</strain>
    </source>
</reference>
<reference key="5">
    <citation type="journal article" date="2007" name="Plant J.">
        <title>Arabidopsis ESK1 encodes a novel regulator of freezing tolerance.</title>
        <authorList>
            <person name="Xin Z."/>
            <person name="Mandaokar A."/>
            <person name="Chen J."/>
            <person name="Last R.L."/>
            <person name="Browse J."/>
        </authorList>
    </citation>
    <scope>GENE FAMILY</scope>
    <source>
        <strain>cv. Columbia</strain>
    </source>
</reference>
<reference key="6">
    <citation type="journal article" date="2010" name="Plant Physiol.">
        <title>TRICHOME BIREFRINGENCE and its homolog AT5G01360 encode plant-specific DUF231 proteins required for cellulose biosynthesis in Arabidopsis.</title>
        <authorList>
            <person name="Bischoff V."/>
            <person name="Nita S."/>
            <person name="Neumetzler L."/>
            <person name="Schindelasch D."/>
            <person name="Urbain A."/>
            <person name="Eshed R."/>
            <person name="Persson S."/>
            <person name="Delmer D."/>
            <person name="Scheible W.R."/>
        </authorList>
    </citation>
    <scope>GENE FAMILY</scope>
    <scope>NOMENCLATURE</scope>
</reference>
<reference key="7">
    <citation type="journal article" date="2010" name="Plant Signal. Behav.">
        <title>Involvement of TBL/DUF231 proteins into cell wall biology.</title>
        <authorList>
            <person name="Bischoff V."/>
            <person name="Selbig J."/>
            <person name="Scheible W.R."/>
        </authorList>
    </citation>
    <scope>3D-STRUCTURE MODELING</scope>
</reference>
<sequence length="380" mass="42709">MGFKLISLLLLFLPLLTVTILSGVEQAFASDKALLVTGRNITADGGRSSLRGKKQRRASGCNLFQGRWVFDASYPFYDSSKCPFIDGEFDCLKFGRPDKQFLKYSWQPESCTIPRFDGGAFLRKYRGKRVMFVGDSLSLNMWESLACMIHASVPNAKTTFLKRTPLSTLTFQEYGVTLYLYRTPYIVDISKERVGRVLNLGAIEGGADAWKNMDVLVFNSWHWWTHKGQSQGWDYIRDGSSLVRDMNRLDAFYKGLSTWARWVDQNVDTAKTRVFFQGISPTHYEGREWNEPRKTCSGQMQPLGGSSYPSGQPPSSGVVSKVLSSMKKPVTLLDITTLSQLRKDAHPSSYGGDGGTDCSHWCLPGLPDTWNQLLYAALTM</sequence>
<feature type="chain" id="PRO_0000425403" description="Protein trichome birefringence-like 38">
    <location>
        <begin position="1"/>
        <end position="380"/>
    </location>
</feature>
<feature type="transmembrane region" description="Helical; Signal-anchor for type II membrane protein" evidence="3">
    <location>
        <begin position="7"/>
        <end position="29"/>
    </location>
</feature>
<feature type="short sequence motif" description="GDS motif">
    <location>
        <begin position="134"/>
        <end position="136"/>
    </location>
</feature>
<feature type="short sequence motif" description="DCXHWCLPGXXDXWN motif">
    <location>
        <begin position="357"/>
        <end position="371"/>
    </location>
</feature>
<proteinExistence type="evidence at transcript level"/>